<keyword id="KW-0150">Chloroplast</keyword>
<keyword id="KW-0249">Electron transport</keyword>
<keyword id="KW-0349">Heme</keyword>
<keyword id="KW-0408">Iron</keyword>
<keyword id="KW-0472">Membrane</keyword>
<keyword id="KW-0479">Metal-binding</keyword>
<keyword id="KW-0602">Photosynthesis</keyword>
<keyword id="KW-0604">Photosystem II</keyword>
<keyword id="KW-0934">Plastid</keyword>
<keyword id="KW-1185">Reference proteome</keyword>
<keyword id="KW-0793">Thylakoid</keyword>
<keyword id="KW-0812">Transmembrane</keyword>
<keyword id="KW-1133">Transmembrane helix</keyword>
<keyword id="KW-0813">Transport</keyword>
<name>PSBE_ORYSI</name>
<organism>
    <name type="scientific">Oryza sativa subsp. indica</name>
    <name type="common">Rice</name>
    <dbReference type="NCBI Taxonomy" id="39946"/>
    <lineage>
        <taxon>Eukaryota</taxon>
        <taxon>Viridiplantae</taxon>
        <taxon>Streptophyta</taxon>
        <taxon>Embryophyta</taxon>
        <taxon>Tracheophyta</taxon>
        <taxon>Spermatophyta</taxon>
        <taxon>Magnoliopsida</taxon>
        <taxon>Liliopsida</taxon>
        <taxon>Poales</taxon>
        <taxon>Poaceae</taxon>
        <taxon>BOP clade</taxon>
        <taxon>Oryzoideae</taxon>
        <taxon>Oryzeae</taxon>
        <taxon>Oryzinae</taxon>
        <taxon>Oryza</taxon>
        <taxon>Oryza sativa</taxon>
    </lineage>
</organism>
<geneLocation type="chloroplast"/>
<protein>
    <recommendedName>
        <fullName evidence="1">Cytochrome b559 subunit alpha</fullName>
    </recommendedName>
    <alternativeName>
        <fullName evidence="1">PSII reaction center subunit V</fullName>
    </alternativeName>
</protein>
<comment type="function">
    <text evidence="1">This b-type cytochrome is tightly associated with the reaction center of photosystem II (PSII). PSII is a light-driven water:plastoquinone oxidoreductase that uses light energy to abstract electrons from H(2)O, generating O(2) and a proton gradient subsequently used for ATP formation. It consists of a core antenna complex that captures photons, and an electron transfer chain that converts photonic excitation into a charge separation.</text>
</comment>
<comment type="cofactor">
    <cofactor evidence="1">
        <name>heme b</name>
        <dbReference type="ChEBI" id="CHEBI:60344"/>
    </cofactor>
    <text evidence="1">With its partner (PsbF) binds heme. PSII binds additional chlorophylls, carotenoids and specific lipids.</text>
</comment>
<comment type="subunit">
    <text evidence="1">Heterodimer of an alpha subunit and a beta subunit. PSII is composed of 1 copy each of membrane proteins PsbA, PsbB, PsbC, PsbD, PsbE, PsbF, PsbH, PsbI, PsbJ, PsbK, PsbL, PsbM, PsbT, PsbX, PsbY, PsbZ, Psb30/Ycf12, at least 3 peripheral proteins of the oxygen-evolving complex and a large number of cofactors. It forms dimeric complexes.</text>
</comment>
<comment type="subcellular location">
    <subcellularLocation>
        <location evidence="1">Plastid</location>
        <location evidence="1">Chloroplast thylakoid membrane</location>
        <topology evidence="1">Single-pass membrane protein</topology>
    </subcellularLocation>
</comment>
<comment type="similarity">
    <text evidence="1">Belongs to the PsbE/PsbF family.</text>
</comment>
<comment type="sequence caution" evidence="2">
    <conflict type="erroneous initiation">
        <sequence resource="EMBL-CDS" id="AAS46066"/>
    </conflict>
    <text>Extended N-terminus.</text>
</comment>
<gene>
    <name evidence="1" type="primary">psbE</name>
    <name type="ORF">9311077</name>
</gene>
<sequence length="83" mass="9445">MSGSTGERSFADIITSIRYWVIHSITIPSLFIAGWLFVSTGLAYDVFGSPRPNEYFTESRQGIPLITDRFDSLEQLDEFSRSF</sequence>
<feature type="chain" id="PRO_0000288996" description="Cytochrome b559 subunit alpha">
    <location>
        <begin position="1"/>
        <end position="83"/>
    </location>
</feature>
<feature type="transmembrane region" description="Helical" evidence="1">
    <location>
        <begin position="21"/>
        <end position="35"/>
    </location>
</feature>
<feature type="binding site" description="axial binding residue" evidence="1">
    <location>
        <position position="23"/>
    </location>
    <ligand>
        <name>heme</name>
        <dbReference type="ChEBI" id="CHEBI:30413"/>
        <note>ligand shared with beta subunit</note>
    </ligand>
    <ligandPart>
        <name>Fe</name>
        <dbReference type="ChEBI" id="CHEBI:18248"/>
    </ligandPart>
</feature>
<reference key="1">
    <citation type="journal article" date="2004" name="Plant Physiol.">
        <title>A comparison of rice chloroplast genomes.</title>
        <authorList>
            <person name="Tang J."/>
            <person name="Xia H."/>
            <person name="Cao M."/>
            <person name="Zhang X."/>
            <person name="Zeng W."/>
            <person name="Hu S."/>
            <person name="Tong W."/>
            <person name="Wang J."/>
            <person name="Wang J."/>
            <person name="Yu J."/>
            <person name="Yang H."/>
            <person name="Zhu L."/>
        </authorList>
    </citation>
    <scope>NUCLEOTIDE SEQUENCE [LARGE SCALE GENOMIC DNA]</scope>
    <source>
        <strain>cv. 93-11</strain>
    </source>
</reference>
<accession>P0C369</accession>
<accession>P05169</accession>
<accession>P10879</accession>
<accession>P69389</accession>
<accession>Q6QXZ9</accession>
<accession>Q6QY63</accession>
<accession>Q95H57</accession>
<evidence type="ECO:0000255" key="1">
    <source>
        <dbReference type="HAMAP-Rule" id="MF_00642"/>
    </source>
</evidence>
<evidence type="ECO:0000305" key="2"/>
<proteinExistence type="inferred from homology"/>
<dbReference type="EMBL" id="AY522329">
    <property type="protein sequence ID" value="AAS46066.1"/>
    <property type="status" value="ALT_INIT"/>
    <property type="molecule type" value="Genomic_DNA"/>
</dbReference>
<dbReference type="RefSeq" id="YP_009161381.1">
    <property type="nucleotide sequence ID" value="NC_027678.1"/>
</dbReference>
<dbReference type="RefSeq" id="YP_654226.2">
    <property type="nucleotide sequence ID" value="NC_008155.1"/>
</dbReference>
<dbReference type="SMR" id="P0C369"/>
<dbReference type="STRING" id="39946.P0C369"/>
<dbReference type="GeneID" id="4126890"/>
<dbReference type="Proteomes" id="UP000007015">
    <property type="component" value="Chloroplast"/>
</dbReference>
<dbReference type="GO" id="GO:0009535">
    <property type="term" value="C:chloroplast thylakoid membrane"/>
    <property type="evidence" value="ECO:0007669"/>
    <property type="project" value="UniProtKB-SubCell"/>
</dbReference>
<dbReference type="GO" id="GO:0009539">
    <property type="term" value="C:photosystem II reaction center"/>
    <property type="evidence" value="ECO:0007669"/>
    <property type="project" value="InterPro"/>
</dbReference>
<dbReference type="GO" id="GO:0009536">
    <property type="term" value="C:plastid"/>
    <property type="evidence" value="ECO:0000305"/>
    <property type="project" value="Gramene"/>
</dbReference>
<dbReference type="GO" id="GO:0009055">
    <property type="term" value="F:electron transfer activity"/>
    <property type="evidence" value="ECO:0007669"/>
    <property type="project" value="UniProtKB-UniRule"/>
</dbReference>
<dbReference type="GO" id="GO:0020037">
    <property type="term" value="F:heme binding"/>
    <property type="evidence" value="ECO:0007669"/>
    <property type="project" value="InterPro"/>
</dbReference>
<dbReference type="GO" id="GO:0005506">
    <property type="term" value="F:iron ion binding"/>
    <property type="evidence" value="ECO:0007669"/>
    <property type="project" value="UniProtKB-UniRule"/>
</dbReference>
<dbReference type="GO" id="GO:0009767">
    <property type="term" value="P:photosynthetic electron transport chain"/>
    <property type="evidence" value="ECO:0007669"/>
    <property type="project" value="InterPro"/>
</dbReference>
<dbReference type="Gene3D" id="1.20.5.860">
    <property type="entry name" value="Photosystem II cytochrome b559, alpha subunit"/>
    <property type="match status" value="1"/>
</dbReference>
<dbReference type="HAMAP" id="MF_00642">
    <property type="entry name" value="PSII_PsbE"/>
    <property type="match status" value="1"/>
</dbReference>
<dbReference type="InterPro" id="IPR006217">
    <property type="entry name" value="PSII_cyt_b559_asu"/>
</dbReference>
<dbReference type="InterPro" id="IPR037025">
    <property type="entry name" value="PSII_cyt_b559_asu_sf"/>
</dbReference>
<dbReference type="InterPro" id="IPR006216">
    <property type="entry name" value="PSII_cyt_b559_CS"/>
</dbReference>
<dbReference type="InterPro" id="IPR013081">
    <property type="entry name" value="PSII_cyt_b559_N"/>
</dbReference>
<dbReference type="InterPro" id="IPR013082">
    <property type="entry name" value="PSII_cytb559_asu_lum"/>
</dbReference>
<dbReference type="NCBIfam" id="TIGR01332">
    <property type="entry name" value="cyt_b559_alpha"/>
    <property type="match status" value="1"/>
</dbReference>
<dbReference type="PANTHER" id="PTHR33391:SF13">
    <property type="entry name" value="CYTOCHROME B559 SUBUNIT ALPHA"/>
    <property type="match status" value="1"/>
</dbReference>
<dbReference type="PANTHER" id="PTHR33391">
    <property type="entry name" value="CYTOCHROME B559 SUBUNIT BETA-RELATED"/>
    <property type="match status" value="1"/>
</dbReference>
<dbReference type="Pfam" id="PF00283">
    <property type="entry name" value="Cytochrom_B559"/>
    <property type="match status" value="1"/>
</dbReference>
<dbReference type="Pfam" id="PF00284">
    <property type="entry name" value="Cytochrom_B559a"/>
    <property type="match status" value="1"/>
</dbReference>
<dbReference type="PIRSF" id="PIRSF000036">
    <property type="entry name" value="PsbE"/>
    <property type="match status" value="1"/>
</dbReference>
<dbReference type="SUPFAM" id="SSF161045">
    <property type="entry name" value="Cytochrome b559 subunits"/>
    <property type="match status" value="1"/>
</dbReference>
<dbReference type="PROSITE" id="PS00537">
    <property type="entry name" value="CYTOCHROME_B559"/>
    <property type="match status" value="1"/>
</dbReference>